<keyword id="KW-0240">DNA-directed RNA polymerase</keyword>
<keyword id="KW-0548">Nucleotidyltransferase</keyword>
<keyword id="KW-0804">Transcription</keyword>
<keyword id="KW-0808">Transferase</keyword>
<accession>B7HFN7</accession>
<dbReference type="EMBL" id="CP001176">
    <property type="protein sequence ID" value="ACK60864.1"/>
    <property type="molecule type" value="Genomic_DNA"/>
</dbReference>
<dbReference type="RefSeq" id="WP_000346278.1">
    <property type="nucleotide sequence ID" value="NC_011725.1"/>
</dbReference>
<dbReference type="SMR" id="B7HFN7"/>
<dbReference type="KEGG" id="bcb:BCB4264_A5462"/>
<dbReference type="HOGENOM" id="CLU_116648_1_0_9"/>
<dbReference type="Proteomes" id="UP000007096">
    <property type="component" value="Chromosome"/>
</dbReference>
<dbReference type="GO" id="GO:0000428">
    <property type="term" value="C:DNA-directed RNA polymerase complex"/>
    <property type="evidence" value="ECO:0007669"/>
    <property type="project" value="UniProtKB-KW"/>
</dbReference>
<dbReference type="GO" id="GO:0003899">
    <property type="term" value="F:DNA-directed RNA polymerase activity"/>
    <property type="evidence" value="ECO:0007669"/>
    <property type="project" value="UniProtKB-UniRule"/>
</dbReference>
<dbReference type="GO" id="GO:0006351">
    <property type="term" value="P:DNA-templated transcription"/>
    <property type="evidence" value="ECO:0007669"/>
    <property type="project" value="InterPro"/>
</dbReference>
<dbReference type="GO" id="GO:0006355">
    <property type="term" value="P:regulation of DNA-templated transcription"/>
    <property type="evidence" value="ECO:0007669"/>
    <property type="project" value="UniProtKB-UniRule"/>
</dbReference>
<dbReference type="FunFam" id="1.10.10.1250:FF:000001">
    <property type="entry name" value="Probable DNA-directed RNA polymerase subunit delta"/>
    <property type="match status" value="1"/>
</dbReference>
<dbReference type="Gene3D" id="1.10.10.1250">
    <property type="entry name" value="RNA polymerase, subunit delta, N-terminal domain"/>
    <property type="match status" value="1"/>
</dbReference>
<dbReference type="HAMAP" id="MF_00357">
    <property type="entry name" value="RNApol_bact_RpoE"/>
    <property type="match status" value="1"/>
</dbReference>
<dbReference type="InterPro" id="IPR007759">
    <property type="entry name" value="Asxl_HARE-HTH"/>
</dbReference>
<dbReference type="InterPro" id="IPR038087">
    <property type="entry name" value="RNAP_delta_N_dom_sf"/>
</dbReference>
<dbReference type="InterPro" id="IPR029757">
    <property type="entry name" value="RpoE"/>
</dbReference>
<dbReference type="NCBIfam" id="TIGR04567">
    <property type="entry name" value="RNAP_delt_lowGC"/>
    <property type="match status" value="1"/>
</dbReference>
<dbReference type="Pfam" id="PF05066">
    <property type="entry name" value="HARE-HTH"/>
    <property type="match status" value="1"/>
</dbReference>
<dbReference type="PROSITE" id="PS51913">
    <property type="entry name" value="HTH_HARE"/>
    <property type="match status" value="1"/>
</dbReference>
<feature type="chain" id="PRO_1000120562" description="Probable DNA-directed RNA polymerase subunit delta">
    <location>
        <begin position="1"/>
        <end position="177"/>
    </location>
</feature>
<feature type="domain" description="HTH HARE-type" evidence="2">
    <location>
        <begin position="14"/>
        <end position="81"/>
    </location>
</feature>
<feature type="region of interest" description="Disordered" evidence="3">
    <location>
        <begin position="90"/>
        <end position="177"/>
    </location>
</feature>
<feature type="compositionally biased region" description="Acidic residues" evidence="3">
    <location>
        <begin position="106"/>
        <end position="177"/>
    </location>
</feature>
<proteinExistence type="inferred from homology"/>
<gene>
    <name evidence="1" type="primary">rpoE</name>
    <name type="ordered locus">BCB4264_A5462</name>
</gene>
<reference key="1">
    <citation type="submission" date="2008-10" db="EMBL/GenBank/DDBJ databases">
        <title>Genome sequence of Bacillus cereus B4264.</title>
        <authorList>
            <person name="Dodson R.J."/>
            <person name="Durkin A.S."/>
            <person name="Rosovitz M.J."/>
            <person name="Rasko D.A."/>
            <person name="Hoffmaster A."/>
            <person name="Ravel J."/>
            <person name="Sutton G."/>
        </authorList>
    </citation>
    <scope>NUCLEOTIDE SEQUENCE [LARGE SCALE GENOMIC DNA]</scope>
    <source>
        <strain>B4264</strain>
    </source>
</reference>
<name>RPOE_BACC4</name>
<comment type="function">
    <text evidence="1">Participates in both the initiation and recycling phases of transcription. In the presence of the delta subunit, RNAP displays an increased specificity of transcription, a decreased affinity for nucleic acids, and an increased efficiency of RNA synthesis because of enhanced recycling.</text>
</comment>
<comment type="subunit">
    <text evidence="1">RNAP is composed of a core of 2 alpha, a beta and a beta' subunits. The core is associated with a delta subunit and one of several sigma factors.</text>
</comment>
<comment type="similarity">
    <text evidence="1">Belongs to the RpoE family.</text>
</comment>
<evidence type="ECO:0000255" key="1">
    <source>
        <dbReference type="HAMAP-Rule" id="MF_00357"/>
    </source>
</evidence>
<evidence type="ECO:0000255" key="2">
    <source>
        <dbReference type="PROSITE-ProRule" id="PRU01261"/>
    </source>
</evidence>
<evidence type="ECO:0000256" key="3">
    <source>
        <dbReference type="SAM" id="MobiDB-lite"/>
    </source>
</evidence>
<protein>
    <recommendedName>
        <fullName evidence="1">Probable DNA-directed RNA polymerase subunit delta</fullName>
    </recommendedName>
    <alternativeName>
        <fullName evidence="1">RNAP delta factor</fullName>
    </alternativeName>
</protein>
<sequence>MDFKQYSPEELKECSMIEVVHSVLGDKKQATTFNELVQEIAQVLGLSQEQVNAKIAQFYTDLNIDGRFINLGENRWGLRSWYPYEQIDEEILPQPKPKKKRKVEEDGFDDYIEEDEDDFDDADVNEDEDDDVEDLDKVLEEEDGDDDDLDDLDEDDDDFAEEELEYDETEEEEEEEL</sequence>
<organism>
    <name type="scientific">Bacillus cereus (strain B4264)</name>
    <dbReference type="NCBI Taxonomy" id="405532"/>
    <lineage>
        <taxon>Bacteria</taxon>
        <taxon>Bacillati</taxon>
        <taxon>Bacillota</taxon>
        <taxon>Bacilli</taxon>
        <taxon>Bacillales</taxon>
        <taxon>Bacillaceae</taxon>
        <taxon>Bacillus</taxon>
        <taxon>Bacillus cereus group</taxon>
    </lineage>
</organism>